<organism>
    <name type="scientific">Mus musculus</name>
    <name type="common">Mouse</name>
    <dbReference type="NCBI Taxonomy" id="10090"/>
    <lineage>
        <taxon>Eukaryota</taxon>
        <taxon>Metazoa</taxon>
        <taxon>Chordata</taxon>
        <taxon>Craniata</taxon>
        <taxon>Vertebrata</taxon>
        <taxon>Euteleostomi</taxon>
        <taxon>Mammalia</taxon>
        <taxon>Eutheria</taxon>
        <taxon>Euarchontoglires</taxon>
        <taxon>Glires</taxon>
        <taxon>Rodentia</taxon>
        <taxon>Myomorpha</taxon>
        <taxon>Muroidea</taxon>
        <taxon>Muridae</taxon>
        <taxon>Murinae</taxon>
        <taxon>Mus</taxon>
        <taxon>Mus</taxon>
    </lineage>
</organism>
<comment type="function">
    <text evidence="1 2 3">Ribosome-binding protein that promotes ribosome hibernation, a process during which ribosomes are stabilized in an inactive state and preserved from proteasomal degradation (By similarity). Acts via its association with EEF2/eEF2 factor at the A-site of the ribosome, promoting ribosome stabilization in an inactive state compatible with storage (By similarity). Plays a key role in ribosome hibernation in the mature oocyte by promoting ribosome stabilization (By similarity). Ribosomes, which are produced in large quantities during oogenesis, are stored and translationally repressed in the oocyte and early embryo (By similarity). Also binds RNA, regulating transcription and pre-mRNA splicing. Binds (via C-terminus) to poly(U) RNA. Seems to play a role in PML-nuclear bodies formation (By similarity). Negatively regulates DNA-binding activity of the transcription factor MEF2C in myocardial cells in response to mechanical stress (By similarity).</text>
</comment>
<comment type="subunit">
    <text evidence="2 3 7 8">Associates with ribosomes; promoting ribosome stabilization (By similarity). Interacts with EEF2/eEF2; promoting ribosome stabilization (By similarity). Interacts with FMR1. Interacts with FXR1 and FXR2. Interacts with CHD3 (via C-terminus). Interacts (via C-terminus) with RACK1. Interacts with p53/TP53 (By similarity). Interacts (via N-terminus) with SRSF9; this interaction is direct (PubMed:19523114). Interacts with SYNCRIP; this interaction is direct. Interacts with MEF2C (via N-terminus); this interaction decreases DNA-binding activity of MEF2C in myocardial cells in response to mechanical stress. Interacts with PRMT1 (via N-terminus) (By similarity). Interacts with SPIN1 (PubMed:23894536).</text>
</comment>
<comment type="subcellular location">
    <subcellularLocation>
        <location evidence="2">Nucleus</location>
    </subcellularLocation>
    <subcellularLocation>
        <location evidence="2">Cytoplasm</location>
    </subcellularLocation>
    <subcellularLocation>
        <location evidence="2">Cytoplasm</location>
        <location evidence="2">Stress granule</location>
    </subcellularLocation>
    <subcellularLocation>
        <location evidence="1">Cytoplasm</location>
        <location evidence="1">Sarcoplasm</location>
    </subcellularLocation>
    <subcellularLocation>
        <location evidence="2">Nucleus</location>
        <location evidence="2">Nuclear body</location>
    </subcellularLocation>
    <subcellularLocation>
        <location evidence="2">Nucleus</location>
        <location evidence="2">Nucleolus</location>
    </subcellularLocation>
    <subcellularLocation>
        <location evidence="2">Nucleus speckle</location>
    </subcellularLocation>
    <subcellularLocation>
        <location evidence="2">Nucleus</location>
        <location evidence="2">Cajal body</location>
    </subcellularLocation>
    <subcellularLocation>
        <location evidence="2">Nucleus</location>
        <location evidence="2">Gem</location>
    </subcellularLocation>
    <text evidence="1 2">Transported into the nuclear compartment in activated leukocytes. Inhibition of methylation alters its distribution between the nuclear and cytoplasmic compartments. Methylation may be required for its localization in subnuclear structures, such as nucleoli, nuclear speckles, Cajal bodies and Gemini of coiled bodies (gems). Colocalizes with FMR1, FXR1 and FXR2 in cytoplasmic stress granules. In myocardial cells, localization at the sarcoplasm is reduced in response to mechanical stress.</text>
</comment>
<comment type="tissue specificity">
    <text evidence="6">Expressed in adult heart, brain, liver, kidney, testis, and in various embryonic tissues, but not in adult spleen, lung or skeletal muscle.</text>
</comment>
<comment type="domain">
    <text evidence="2">The C-terminal region is necessary for nucleus and cytoplasmic localization. The N-terminal region is necessary for nucleus and nuclear bodies localization. Regions containing Arg-Gly-Gly repeats (RGG/RXR-box) may be preferentially methylated by PRMT1.</text>
</comment>
<comment type="PTM">
    <text evidence="2">Phosphorylated by phorbol 12-myristate 13-acetate (PMA)-activated PKC isoforms at Thr-352 and Thr-373.</text>
</comment>
<comment type="PTM">
    <text evidence="2">Methylated. Methylation is decreased by phorbol 12-myristate 13-acetate (PMA)-activated PKC, in vitro.</text>
</comment>
<comment type="similarity">
    <text evidence="10">Belongs to the SERBP1-HABP4 family.</text>
</comment>
<comment type="sequence caution" evidence="10">
    <conflict type="miscellaneous discrepancy">
        <sequence resource="EMBL-CDS" id="BAB30437"/>
    </conflict>
    <text>Intron retention.</text>
</comment>
<keyword id="KW-0175">Coiled coil</keyword>
<keyword id="KW-0963">Cytoplasm</keyword>
<keyword id="KW-1017">Isopeptide bond</keyword>
<keyword id="KW-0488">Methylation</keyword>
<keyword id="KW-0507">mRNA processing</keyword>
<keyword id="KW-0508">mRNA splicing</keyword>
<keyword id="KW-0539">Nucleus</keyword>
<keyword id="KW-0597">Phosphoprotein</keyword>
<keyword id="KW-1185">Reference proteome</keyword>
<keyword id="KW-0694">RNA-binding</keyword>
<keyword id="KW-0804">Transcription</keyword>
<keyword id="KW-0805">Transcription regulation</keyword>
<keyword id="KW-0810">Translation regulation</keyword>
<keyword id="KW-0832">Ubl conjugation</keyword>
<proteinExistence type="evidence at protein level"/>
<accession>Q9JKS5</accession>
<accession>Q3UNH8</accession>
<accession>Q9D450</accession>
<feature type="chain" id="PRO_0000257973" description="Intracellular hyaluronan-binding protein 4">
    <location>
        <begin position="1"/>
        <end position="411"/>
    </location>
</feature>
<feature type="region of interest" description="Disordered" evidence="5">
    <location>
        <begin position="42"/>
        <end position="271"/>
    </location>
</feature>
<feature type="region of interest" description="Disordered" evidence="5">
    <location>
        <begin position="296"/>
        <end position="318"/>
    </location>
</feature>
<feature type="region of interest" description="Disordered" evidence="5">
    <location>
        <begin position="358"/>
        <end position="411"/>
    </location>
</feature>
<feature type="coiled-coil region" evidence="4">
    <location>
        <begin position="42"/>
        <end position="62"/>
    </location>
</feature>
<feature type="coiled-coil region" evidence="4">
    <location>
        <begin position="279"/>
        <end position="301"/>
    </location>
</feature>
<feature type="compositionally biased region" description="Basic and acidic residues" evidence="5">
    <location>
        <begin position="87"/>
        <end position="97"/>
    </location>
</feature>
<feature type="compositionally biased region" description="Basic and acidic residues" evidence="5">
    <location>
        <begin position="138"/>
        <end position="181"/>
    </location>
</feature>
<feature type="compositionally biased region" description="Basic and acidic residues" evidence="5">
    <location>
        <begin position="205"/>
        <end position="229"/>
    </location>
</feature>
<feature type="compositionally biased region" description="Basic and acidic residues" evidence="5">
    <location>
        <begin position="296"/>
        <end position="313"/>
    </location>
</feature>
<feature type="compositionally biased region" description="Acidic residues" evidence="5">
    <location>
        <begin position="402"/>
        <end position="411"/>
    </location>
</feature>
<feature type="modified residue" description="Phosphoserine" evidence="15">
    <location>
        <position position="7"/>
    </location>
</feature>
<feature type="modified residue" description="Phosphoserine" evidence="15">
    <location>
        <position position="36"/>
    </location>
</feature>
<feature type="modified residue" description="Omega-N-methylarginine" evidence="2">
    <location>
        <position position="70"/>
    </location>
</feature>
<feature type="modified residue" description="Phosphoserine" evidence="2">
    <location>
        <position position="74"/>
    </location>
</feature>
<feature type="modified residue" description="Phosphoserine" evidence="2">
    <location>
        <position position="108"/>
    </location>
</feature>
<feature type="modified residue" description="Phosphothreonine; by PKC" evidence="2">
    <location>
        <position position="352"/>
    </location>
</feature>
<feature type="modified residue" description="Phosphothreonine; by PKC" evidence="2">
    <location>
        <position position="373"/>
    </location>
</feature>
<feature type="cross-link" description="Glycyl lysine isopeptide (Lys-Gly) (interchain with G-Cter in SUMO1); alternate" evidence="2">
    <location>
        <position position="212"/>
    </location>
</feature>
<feature type="cross-link" description="Glycyl lysine isopeptide (Lys-Gly) (interchain with G-Cter in SUMO2); alternate" evidence="2">
    <location>
        <position position="212"/>
    </location>
</feature>
<feature type="cross-link" description="Glycyl lysine isopeptide (Lys-Gly) (interchain with G-Cter in SUMO1); alternate" evidence="2">
    <location>
        <position position="274"/>
    </location>
</feature>
<feature type="cross-link" description="Glycyl lysine isopeptide (Lys-Gly) (interchain with G-Cter in SUMO2); alternate" evidence="2">
    <location>
        <position position="274"/>
    </location>
</feature>
<feature type="cross-link" description="Glycyl lysine isopeptide (Lys-Gly) (interchain with G-Cter in SUMO1); alternate" evidence="2">
    <location>
        <position position="334"/>
    </location>
</feature>
<feature type="cross-link" description="Glycyl lysine isopeptide (Lys-Gly) (interchain with G-Cter in SUMO2); alternate" evidence="2">
    <location>
        <position position="334"/>
    </location>
</feature>
<feature type="sequence conflict" description="In Ref. 2; BAB30437." evidence="10" ref="2">
    <original>A</original>
    <variation>AA</variation>
    <location>
        <position position="64"/>
    </location>
</feature>
<feature type="sequence conflict" description="In Ref. 2; BAE25769." evidence="10" ref="2">
    <original>P</original>
    <variation>L</variation>
    <location>
        <position position="187"/>
    </location>
</feature>
<feature type="sequence conflict" description="In Ref. 1; AAF36966." evidence="10" ref="1">
    <original>R</original>
    <variation>K</variation>
    <location>
        <position position="194"/>
    </location>
</feature>
<feature type="sequence conflict" description="In Ref. 2; BAB30437." evidence="10" ref="2">
    <original>T</original>
    <variation>A</variation>
    <location>
        <position position="266"/>
    </location>
</feature>
<dbReference type="EMBL" id="AF227684">
    <property type="protein sequence ID" value="AAF36966.1"/>
    <property type="molecule type" value="mRNA"/>
</dbReference>
<dbReference type="EMBL" id="AK016800">
    <property type="protein sequence ID" value="BAB30437.1"/>
    <property type="status" value="ALT_SEQ"/>
    <property type="molecule type" value="mRNA"/>
</dbReference>
<dbReference type="EMBL" id="AK144206">
    <property type="protein sequence ID" value="BAE25769.1"/>
    <property type="molecule type" value="mRNA"/>
</dbReference>
<dbReference type="RefSeq" id="NP_064370.2">
    <property type="nucleotide sequence ID" value="NM_019986.3"/>
</dbReference>
<dbReference type="BioGRID" id="208047">
    <property type="interactions" value="13"/>
</dbReference>
<dbReference type="FunCoup" id="Q9JKS5">
    <property type="interactions" value="686"/>
</dbReference>
<dbReference type="IntAct" id="Q9JKS5">
    <property type="interactions" value="2"/>
</dbReference>
<dbReference type="MINT" id="Q9JKS5"/>
<dbReference type="STRING" id="10090.ENSMUSP00000021929"/>
<dbReference type="iPTMnet" id="Q9JKS5"/>
<dbReference type="PhosphoSitePlus" id="Q9JKS5"/>
<dbReference type="jPOST" id="Q9JKS5"/>
<dbReference type="PaxDb" id="10090-ENSMUSP00000021929"/>
<dbReference type="ProteomicsDB" id="269808"/>
<dbReference type="Pumba" id="Q9JKS5"/>
<dbReference type="GeneID" id="56541"/>
<dbReference type="KEGG" id="mmu:56541"/>
<dbReference type="AGR" id="MGI:1891713"/>
<dbReference type="CTD" id="22927"/>
<dbReference type="MGI" id="MGI:1891713">
    <property type="gene designation" value="Habp4"/>
</dbReference>
<dbReference type="eggNOG" id="KOG2945">
    <property type="taxonomic scope" value="Eukaryota"/>
</dbReference>
<dbReference type="InParanoid" id="Q9JKS5"/>
<dbReference type="OrthoDB" id="6022699at2759"/>
<dbReference type="PhylomeDB" id="Q9JKS5"/>
<dbReference type="Reactome" id="R-MMU-114608">
    <property type="pathway name" value="Platelet degranulation"/>
</dbReference>
<dbReference type="BioGRID-ORCS" id="56541">
    <property type="hits" value="3 hits in 78 CRISPR screens"/>
</dbReference>
<dbReference type="CD-CODE" id="CE726F99">
    <property type="entry name" value="Postsynaptic density"/>
</dbReference>
<dbReference type="ChiTaRS" id="Habp4">
    <property type="organism name" value="mouse"/>
</dbReference>
<dbReference type="PRO" id="PR:Q9JKS5"/>
<dbReference type="Proteomes" id="UP000000589">
    <property type="component" value="Unplaced"/>
</dbReference>
<dbReference type="RNAct" id="Q9JKS5">
    <property type="molecule type" value="protein"/>
</dbReference>
<dbReference type="GO" id="GO:0015030">
    <property type="term" value="C:Cajal body"/>
    <property type="evidence" value="ECO:0000250"/>
    <property type="project" value="UniProtKB"/>
</dbReference>
<dbReference type="GO" id="GO:0005737">
    <property type="term" value="C:cytoplasm"/>
    <property type="evidence" value="ECO:0000314"/>
    <property type="project" value="MGI"/>
</dbReference>
<dbReference type="GO" id="GO:0010494">
    <property type="term" value="C:cytoplasmic stress granule"/>
    <property type="evidence" value="ECO:0000250"/>
    <property type="project" value="UniProtKB"/>
</dbReference>
<dbReference type="GO" id="GO:0097504">
    <property type="term" value="C:Gemini of Cajal bodies"/>
    <property type="evidence" value="ECO:0000250"/>
    <property type="project" value="UniProtKB"/>
</dbReference>
<dbReference type="GO" id="GO:0016607">
    <property type="term" value="C:nuclear speck"/>
    <property type="evidence" value="ECO:0000250"/>
    <property type="project" value="UniProtKB"/>
</dbReference>
<dbReference type="GO" id="GO:0005730">
    <property type="term" value="C:nucleolus"/>
    <property type="evidence" value="ECO:0000250"/>
    <property type="project" value="UniProtKB"/>
</dbReference>
<dbReference type="GO" id="GO:0005634">
    <property type="term" value="C:nucleus"/>
    <property type="evidence" value="ECO:0000250"/>
    <property type="project" value="UniProtKB"/>
</dbReference>
<dbReference type="GO" id="GO:0030017">
    <property type="term" value="C:sarcomere"/>
    <property type="evidence" value="ECO:0000250"/>
    <property type="project" value="UniProtKB"/>
</dbReference>
<dbReference type="GO" id="GO:0016528">
    <property type="term" value="C:sarcoplasm"/>
    <property type="evidence" value="ECO:0007669"/>
    <property type="project" value="UniProtKB-SubCell"/>
</dbReference>
<dbReference type="GO" id="GO:0045202">
    <property type="term" value="C:synapse"/>
    <property type="evidence" value="ECO:0000314"/>
    <property type="project" value="SynGO"/>
</dbReference>
<dbReference type="GO" id="GO:0005540">
    <property type="term" value="F:hyaluronic acid binding"/>
    <property type="evidence" value="ECO:0000266"/>
    <property type="project" value="MGI"/>
</dbReference>
<dbReference type="GO" id="GO:0043022">
    <property type="term" value="F:ribosome binding"/>
    <property type="evidence" value="ECO:0000250"/>
    <property type="project" value="UniProtKB"/>
</dbReference>
<dbReference type="GO" id="GO:0003723">
    <property type="term" value="F:RNA binding"/>
    <property type="evidence" value="ECO:0007669"/>
    <property type="project" value="UniProtKB-KW"/>
</dbReference>
<dbReference type="GO" id="GO:0032183">
    <property type="term" value="F:SUMO binding"/>
    <property type="evidence" value="ECO:0000250"/>
    <property type="project" value="UniProtKB"/>
</dbReference>
<dbReference type="GO" id="GO:0061770">
    <property type="term" value="F:translation elongation factor binding"/>
    <property type="evidence" value="ECO:0000250"/>
    <property type="project" value="UniProtKB"/>
</dbReference>
<dbReference type="GO" id="GO:0071260">
    <property type="term" value="P:cellular response to mechanical stimulus"/>
    <property type="evidence" value="ECO:0000250"/>
    <property type="project" value="UniProtKB"/>
</dbReference>
<dbReference type="GO" id="GO:0030212">
    <property type="term" value="P:hyaluronan metabolic process"/>
    <property type="evidence" value="ECO:0000266"/>
    <property type="project" value="MGI"/>
</dbReference>
<dbReference type="GO" id="GO:0006397">
    <property type="term" value="P:mRNA processing"/>
    <property type="evidence" value="ECO:0007669"/>
    <property type="project" value="UniProtKB-KW"/>
</dbReference>
<dbReference type="GO" id="GO:0030578">
    <property type="term" value="P:PML body organization"/>
    <property type="evidence" value="ECO:0000250"/>
    <property type="project" value="UniProtKB"/>
</dbReference>
<dbReference type="GO" id="GO:0033120">
    <property type="term" value="P:positive regulation of RNA splicing"/>
    <property type="evidence" value="ECO:0000250"/>
    <property type="project" value="UniProtKB"/>
</dbReference>
<dbReference type="GO" id="GO:0045948">
    <property type="term" value="P:positive regulation of translational initiation"/>
    <property type="evidence" value="ECO:0000250"/>
    <property type="project" value="UniProtKB"/>
</dbReference>
<dbReference type="GO" id="GO:0141014">
    <property type="term" value="P:ribosome hibernation"/>
    <property type="evidence" value="ECO:0000250"/>
    <property type="project" value="UniProtKB"/>
</dbReference>
<dbReference type="GO" id="GO:0008380">
    <property type="term" value="P:RNA splicing"/>
    <property type="evidence" value="ECO:0007669"/>
    <property type="project" value="UniProtKB-KW"/>
</dbReference>
<dbReference type="InterPro" id="IPR039764">
    <property type="entry name" value="HABP4/SERBP1-like"/>
</dbReference>
<dbReference type="InterPro" id="IPR006861">
    <property type="entry name" value="HABP4_PAIRBP1-bd"/>
</dbReference>
<dbReference type="InterPro" id="IPR032381">
    <property type="entry name" value="IHABP4_N"/>
</dbReference>
<dbReference type="PANTHER" id="PTHR12299">
    <property type="entry name" value="HYALURONIC ACID-BINDING PROTEIN 4"/>
    <property type="match status" value="1"/>
</dbReference>
<dbReference type="PANTHER" id="PTHR12299:SF30">
    <property type="entry name" value="INTRACELLULAR HYALURONAN-BINDING PROTEIN 4"/>
    <property type="match status" value="1"/>
</dbReference>
<dbReference type="Pfam" id="PF04774">
    <property type="entry name" value="HABP4_PAI-RBP1"/>
    <property type="match status" value="1"/>
</dbReference>
<dbReference type="Pfam" id="PF16174">
    <property type="entry name" value="IHABP4_N"/>
    <property type="match status" value="2"/>
</dbReference>
<dbReference type="SMART" id="SM01233">
    <property type="entry name" value="HABP4_PAI-RBP1"/>
    <property type="match status" value="1"/>
</dbReference>
<gene>
    <name evidence="14" type="primary">Habp4</name>
</gene>
<reference evidence="10 11" key="1">
    <citation type="journal article" date="2000" name="J. Biol. Chem.">
        <title>Molecular characterization of a novel intracellular hyaluronan-binding protein.</title>
        <authorList>
            <person name="Huang L."/>
            <person name="Grammatikakis N."/>
            <person name="Yoneda M."/>
            <person name="Banerjee S.D."/>
            <person name="Toole B.P."/>
        </authorList>
    </citation>
    <scope>NUCLEOTIDE SEQUENCE [MRNA]</scope>
    <scope>TISSUE SPECIFICITY</scope>
</reference>
<reference evidence="10 13" key="2">
    <citation type="journal article" date="2005" name="Science">
        <title>The transcriptional landscape of the mammalian genome.</title>
        <authorList>
            <person name="Carninci P."/>
            <person name="Kasukawa T."/>
            <person name="Katayama S."/>
            <person name="Gough J."/>
            <person name="Frith M.C."/>
            <person name="Maeda N."/>
            <person name="Oyama R."/>
            <person name="Ravasi T."/>
            <person name="Lenhard B."/>
            <person name="Wells C."/>
            <person name="Kodzius R."/>
            <person name="Shimokawa K."/>
            <person name="Bajic V.B."/>
            <person name="Brenner S.E."/>
            <person name="Batalov S."/>
            <person name="Forrest A.R."/>
            <person name="Zavolan M."/>
            <person name="Davis M.J."/>
            <person name="Wilming L.G."/>
            <person name="Aidinis V."/>
            <person name="Allen J.E."/>
            <person name="Ambesi-Impiombato A."/>
            <person name="Apweiler R."/>
            <person name="Aturaliya R.N."/>
            <person name="Bailey T.L."/>
            <person name="Bansal M."/>
            <person name="Baxter L."/>
            <person name="Beisel K.W."/>
            <person name="Bersano T."/>
            <person name="Bono H."/>
            <person name="Chalk A.M."/>
            <person name="Chiu K.P."/>
            <person name="Choudhary V."/>
            <person name="Christoffels A."/>
            <person name="Clutterbuck D.R."/>
            <person name="Crowe M.L."/>
            <person name="Dalla E."/>
            <person name="Dalrymple B.P."/>
            <person name="de Bono B."/>
            <person name="Della Gatta G."/>
            <person name="di Bernardo D."/>
            <person name="Down T."/>
            <person name="Engstrom P."/>
            <person name="Fagiolini M."/>
            <person name="Faulkner G."/>
            <person name="Fletcher C.F."/>
            <person name="Fukushima T."/>
            <person name="Furuno M."/>
            <person name="Futaki S."/>
            <person name="Gariboldi M."/>
            <person name="Georgii-Hemming P."/>
            <person name="Gingeras T.R."/>
            <person name="Gojobori T."/>
            <person name="Green R.E."/>
            <person name="Gustincich S."/>
            <person name="Harbers M."/>
            <person name="Hayashi Y."/>
            <person name="Hensch T.K."/>
            <person name="Hirokawa N."/>
            <person name="Hill D."/>
            <person name="Huminiecki L."/>
            <person name="Iacono M."/>
            <person name="Ikeo K."/>
            <person name="Iwama A."/>
            <person name="Ishikawa T."/>
            <person name="Jakt M."/>
            <person name="Kanapin A."/>
            <person name="Katoh M."/>
            <person name="Kawasawa Y."/>
            <person name="Kelso J."/>
            <person name="Kitamura H."/>
            <person name="Kitano H."/>
            <person name="Kollias G."/>
            <person name="Krishnan S.P."/>
            <person name="Kruger A."/>
            <person name="Kummerfeld S.K."/>
            <person name="Kurochkin I.V."/>
            <person name="Lareau L.F."/>
            <person name="Lazarevic D."/>
            <person name="Lipovich L."/>
            <person name="Liu J."/>
            <person name="Liuni S."/>
            <person name="McWilliam S."/>
            <person name="Madan Babu M."/>
            <person name="Madera M."/>
            <person name="Marchionni L."/>
            <person name="Matsuda H."/>
            <person name="Matsuzawa S."/>
            <person name="Miki H."/>
            <person name="Mignone F."/>
            <person name="Miyake S."/>
            <person name="Morris K."/>
            <person name="Mottagui-Tabar S."/>
            <person name="Mulder N."/>
            <person name="Nakano N."/>
            <person name="Nakauchi H."/>
            <person name="Ng P."/>
            <person name="Nilsson R."/>
            <person name="Nishiguchi S."/>
            <person name="Nishikawa S."/>
            <person name="Nori F."/>
            <person name="Ohara O."/>
            <person name="Okazaki Y."/>
            <person name="Orlando V."/>
            <person name="Pang K.C."/>
            <person name="Pavan W.J."/>
            <person name="Pavesi G."/>
            <person name="Pesole G."/>
            <person name="Petrovsky N."/>
            <person name="Piazza S."/>
            <person name="Reed J."/>
            <person name="Reid J.F."/>
            <person name="Ring B.Z."/>
            <person name="Ringwald M."/>
            <person name="Rost B."/>
            <person name="Ruan Y."/>
            <person name="Salzberg S.L."/>
            <person name="Sandelin A."/>
            <person name="Schneider C."/>
            <person name="Schoenbach C."/>
            <person name="Sekiguchi K."/>
            <person name="Semple C.A."/>
            <person name="Seno S."/>
            <person name="Sessa L."/>
            <person name="Sheng Y."/>
            <person name="Shibata Y."/>
            <person name="Shimada H."/>
            <person name="Shimada K."/>
            <person name="Silva D."/>
            <person name="Sinclair B."/>
            <person name="Sperling S."/>
            <person name="Stupka E."/>
            <person name="Sugiura K."/>
            <person name="Sultana R."/>
            <person name="Takenaka Y."/>
            <person name="Taki K."/>
            <person name="Tammoja K."/>
            <person name="Tan S.L."/>
            <person name="Tang S."/>
            <person name="Taylor M.S."/>
            <person name="Tegner J."/>
            <person name="Teichmann S.A."/>
            <person name="Ueda H.R."/>
            <person name="van Nimwegen E."/>
            <person name="Verardo R."/>
            <person name="Wei C.L."/>
            <person name="Yagi K."/>
            <person name="Yamanishi H."/>
            <person name="Zabarovsky E."/>
            <person name="Zhu S."/>
            <person name="Zimmer A."/>
            <person name="Hide W."/>
            <person name="Bult C."/>
            <person name="Grimmond S.M."/>
            <person name="Teasdale R.D."/>
            <person name="Liu E.T."/>
            <person name="Brusic V."/>
            <person name="Quackenbush J."/>
            <person name="Wahlestedt C."/>
            <person name="Mattick J.S."/>
            <person name="Hume D.A."/>
            <person name="Kai C."/>
            <person name="Sasaki D."/>
            <person name="Tomaru Y."/>
            <person name="Fukuda S."/>
            <person name="Kanamori-Katayama M."/>
            <person name="Suzuki M."/>
            <person name="Aoki J."/>
            <person name="Arakawa T."/>
            <person name="Iida J."/>
            <person name="Imamura K."/>
            <person name="Itoh M."/>
            <person name="Kato T."/>
            <person name="Kawaji H."/>
            <person name="Kawagashira N."/>
            <person name="Kawashima T."/>
            <person name="Kojima M."/>
            <person name="Kondo S."/>
            <person name="Konno H."/>
            <person name="Nakano K."/>
            <person name="Ninomiya N."/>
            <person name="Nishio T."/>
            <person name="Okada M."/>
            <person name="Plessy C."/>
            <person name="Shibata K."/>
            <person name="Shiraki T."/>
            <person name="Suzuki S."/>
            <person name="Tagami M."/>
            <person name="Waki K."/>
            <person name="Watahiki A."/>
            <person name="Okamura-Oho Y."/>
            <person name="Suzuki H."/>
            <person name="Kawai J."/>
            <person name="Hayashizaki Y."/>
        </authorList>
    </citation>
    <scope>NUCLEOTIDE SEQUENCE [LARGE SCALE MRNA]</scope>
    <source>
        <strain evidence="12">C57BL/6J</strain>
        <tissue evidence="12">Testis</tissue>
    </source>
</reference>
<reference key="3">
    <citation type="journal article" date="2006" name="Mol. Cell. Proteomics">
        <title>Comprehensive identification of phosphorylation sites in postsynaptic density preparations.</title>
        <authorList>
            <person name="Trinidad J.C."/>
            <person name="Specht C.G."/>
            <person name="Thalhammer A."/>
            <person name="Schoepfer R."/>
            <person name="Burlingame A.L."/>
        </authorList>
    </citation>
    <scope>IDENTIFICATION BY MASS SPECTROMETRY [LARGE SCALE ANALYSIS]</scope>
    <source>
        <tissue>Brain</tissue>
    </source>
</reference>
<reference key="4">
    <citation type="journal article" date="2009" name="FEBS J.">
        <title>Functional association of human Ki-1/57 with pre-mRNA splicing events.</title>
        <authorList>
            <person name="Bressan G.C."/>
            <person name="Quaresma A.J."/>
            <person name="Moraes E.C."/>
            <person name="Manfiolli A.O."/>
            <person name="Passos D.O."/>
            <person name="Gomes M.D."/>
            <person name="Kobarg J."/>
        </authorList>
    </citation>
    <scope>INTERACTION WITH SRSF9</scope>
</reference>
<reference key="5">
    <citation type="journal article" date="2010" name="Cell">
        <title>A tissue-specific atlas of mouse protein phosphorylation and expression.</title>
        <authorList>
            <person name="Huttlin E.L."/>
            <person name="Jedrychowski M.P."/>
            <person name="Elias J.E."/>
            <person name="Goswami T."/>
            <person name="Rad R."/>
            <person name="Beausoleil S.A."/>
            <person name="Villen J."/>
            <person name="Haas W."/>
            <person name="Sowa M.E."/>
            <person name="Gygi S.P."/>
        </authorList>
    </citation>
    <scope>PHOSPHORYLATION [LARGE SCALE ANALYSIS] AT SER-7 AND SER-36</scope>
    <scope>IDENTIFICATION BY MASS SPECTROMETRY [LARGE SCALE ANALYSIS]</scope>
    <source>
        <tissue>Brain</tissue>
    </source>
</reference>
<reference key="6">
    <citation type="journal article" date="2013" name="PLoS ONE">
        <title>A tudor domain protein SPINDLIN1 interacts with the mRNA-binding protein SERBP1 and is involved in mouse oocyte meiotic resumption.</title>
        <authorList>
            <person name="Chew T.G."/>
            <person name="Peaston A."/>
            <person name="Lim A.K."/>
            <person name="Lorthongpanich C."/>
            <person name="Knowles B.B."/>
            <person name="Solter D."/>
        </authorList>
    </citation>
    <scope>INTERACTION WITH SPIN1</scope>
</reference>
<sequence>MKGALGSPVAAAGAAMQETFGCVVANRFHQLLDDESDPFDILREAEHRRQQQLQRKRRDEAAAASGAGHRGGRSPAVASGHRPGAGGRRESQKERKSLAASGAQQPDSPGGPQPPGQKRTPRRGEQQGWNDNRGTDVVLERAERRSYREYRPYETERQADLPVEKFTDEKPVDRFDRDRPLRGRGGPRGGLRSRGRGGPGNRAFDSFDQRGKRDFERYSSNDKTNRMEDSMGGCGIRPWGSGKDTSDTEPPAPMEETSMMEECQGTLDEESAAKVPELEVEEENQVQEMTLDEWKNLQEQTRPKPEFNIRKPESTVPSKAVVIHKSRYRDDMVKEDYEDESHVFRKAANDITSQLEINFGNLPRPGRGARGSTRGGRGRMRRTENYGPRAEVVTQDVAPNPDDPEDFPALA</sequence>
<evidence type="ECO:0000250" key="1">
    <source>
        <dbReference type="UniProtKB" id="A1L1K8"/>
    </source>
</evidence>
<evidence type="ECO:0000250" key="2">
    <source>
        <dbReference type="UniProtKB" id="Q5JVS0"/>
    </source>
</evidence>
<evidence type="ECO:0000250" key="3">
    <source>
        <dbReference type="UniProtKB" id="Q5XJA5"/>
    </source>
</evidence>
<evidence type="ECO:0000255" key="4"/>
<evidence type="ECO:0000256" key="5">
    <source>
        <dbReference type="SAM" id="MobiDB-lite"/>
    </source>
</evidence>
<evidence type="ECO:0000269" key="6">
    <source>
    </source>
</evidence>
<evidence type="ECO:0000269" key="7">
    <source>
    </source>
</evidence>
<evidence type="ECO:0000269" key="8">
    <source>
    </source>
</evidence>
<evidence type="ECO:0000303" key="9">
    <source>
    </source>
</evidence>
<evidence type="ECO:0000305" key="10"/>
<evidence type="ECO:0000312" key="11">
    <source>
        <dbReference type="EMBL" id="AAF36966.1"/>
    </source>
</evidence>
<evidence type="ECO:0000312" key="12">
    <source>
        <dbReference type="EMBL" id="BAB30437.1"/>
    </source>
</evidence>
<evidence type="ECO:0000312" key="13">
    <source>
        <dbReference type="EMBL" id="BAE25769.1"/>
    </source>
</evidence>
<evidence type="ECO:0000312" key="14">
    <source>
        <dbReference type="MGI" id="MGI:1891713"/>
    </source>
</evidence>
<evidence type="ECO:0007744" key="15">
    <source>
    </source>
</evidence>
<protein>
    <recommendedName>
        <fullName evidence="9">Intracellular hyaluronan-binding protein 4</fullName>
        <shortName evidence="9">IHABP-4</shortName>
        <shortName evidence="9">IHABP4</shortName>
    </recommendedName>
    <alternativeName>
        <fullName evidence="14">Hyaluronic acid-binding protein 4</fullName>
    </alternativeName>
</protein>
<name>HABP4_MOUSE</name>